<reference key="1">
    <citation type="journal article" date="1997" name="Nature">
        <title>The nucleotide sequence of Saccharomyces cerevisiae chromosome XVI.</title>
        <authorList>
            <person name="Bussey H."/>
            <person name="Storms R.K."/>
            <person name="Ahmed A."/>
            <person name="Albermann K."/>
            <person name="Allen E."/>
            <person name="Ansorge W."/>
            <person name="Araujo R."/>
            <person name="Aparicio A."/>
            <person name="Barrell B.G."/>
            <person name="Badcock K."/>
            <person name="Benes V."/>
            <person name="Botstein D."/>
            <person name="Bowman S."/>
            <person name="Brueckner M."/>
            <person name="Carpenter J."/>
            <person name="Cherry J.M."/>
            <person name="Chung E."/>
            <person name="Churcher C.M."/>
            <person name="Coster F."/>
            <person name="Davis K."/>
            <person name="Davis R.W."/>
            <person name="Dietrich F.S."/>
            <person name="Delius H."/>
            <person name="DiPaolo T."/>
            <person name="Dubois E."/>
            <person name="Duesterhoeft A."/>
            <person name="Duncan M."/>
            <person name="Floeth M."/>
            <person name="Fortin N."/>
            <person name="Friesen J.D."/>
            <person name="Fritz C."/>
            <person name="Goffeau A."/>
            <person name="Hall J."/>
            <person name="Hebling U."/>
            <person name="Heumann K."/>
            <person name="Hilbert H."/>
            <person name="Hillier L.W."/>
            <person name="Hunicke-Smith S."/>
            <person name="Hyman R.W."/>
            <person name="Johnston M."/>
            <person name="Kalman S."/>
            <person name="Kleine K."/>
            <person name="Komp C."/>
            <person name="Kurdi O."/>
            <person name="Lashkari D."/>
            <person name="Lew H."/>
            <person name="Lin A."/>
            <person name="Lin D."/>
            <person name="Louis E.J."/>
            <person name="Marathe R."/>
            <person name="Messenguy F."/>
            <person name="Mewes H.-W."/>
            <person name="Mirtipati S."/>
            <person name="Moestl D."/>
            <person name="Mueller-Auer S."/>
            <person name="Namath A."/>
            <person name="Nentwich U."/>
            <person name="Oefner P."/>
            <person name="Pearson D."/>
            <person name="Petel F.X."/>
            <person name="Pohl T.M."/>
            <person name="Purnelle B."/>
            <person name="Rajandream M.A."/>
            <person name="Rechmann S."/>
            <person name="Rieger M."/>
            <person name="Riles L."/>
            <person name="Roberts D."/>
            <person name="Schaefer M."/>
            <person name="Scharfe M."/>
            <person name="Scherens B."/>
            <person name="Schramm S."/>
            <person name="Schroeder M."/>
            <person name="Sdicu A.-M."/>
            <person name="Tettelin H."/>
            <person name="Urrestarazu L.A."/>
            <person name="Ushinsky S."/>
            <person name="Vierendeels F."/>
            <person name="Vissers S."/>
            <person name="Voss H."/>
            <person name="Walsh S.V."/>
            <person name="Wambutt R."/>
            <person name="Wang Y."/>
            <person name="Wedler E."/>
            <person name="Wedler H."/>
            <person name="Winnett E."/>
            <person name="Zhong W.-W."/>
            <person name="Zollner A."/>
            <person name="Vo D.H."/>
            <person name="Hani J."/>
        </authorList>
    </citation>
    <scope>NUCLEOTIDE SEQUENCE [LARGE SCALE GENOMIC DNA]</scope>
    <source>
        <strain>ATCC 204508 / S288c</strain>
    </source>
</reference>
<reference key="2">
    <citation type="journal article" date="2014" name="G3 (Bethesda)">
        <title>The reference genome sequence of Saccharomyces cerevisiae: Then and now.</title>
        <authorList>
            <person name="Engel S.R."/>
            <person name="Dietrich F.S."/>
            <person name="Fisk D.G."/>
            <person name="Binkley G."/>
            <person name="Balakrishnan R."/>
            <person name="Costanzo M.C."/>
            <person name="Dwight S.S."/>
            <person name="Hitz B.C."/>
            <person name="Karra K."/>
            <person name="Nash R.S."/>
            <person name="Weng S."/>
            <person name="Wong E.D."/>
            <person name="Lloyd P."/>
            <person name="Skrzypek M.S."/>
            <person name="Miyasato S.R."/>
            <person name="Simison M."/>
            <person name="Cherry J.M."/>
        </authorList>
    </citation>
    <scope>GENOME REANNOTATION</scope>
    <source>
        <strain>ATCC 204508 / S288c</strain>
    </source>
</reference>
<reference key="3">
    <citation type="journal article" date="2002" name="Mol. Biol. Cell">
        <title>Genomic screen for vacuolar protein sorting genes in Saccharomyces cerevisiae.</title>
        <authorList>
            <person name="Bonangelino C.J."/>
            <person name="Chavez E.M."/>
            <person name="Bonifacino J.S."/>
        </authorList>
    </citation>
    <scope>DISRUPTION PHENOTYPE</scope>
</reference>
<protein>
    <recommendedName>
        <fullName>Putative uncharacterized protein VPS69</fullName>
    </recommendedName>
</protein>
<comment type="subcellular location">
    <subcellularLocation>
        <location evidence="3">Membrane</location>
        <topology evidence="3">Multi-pass membrane protein</topology>
    </subcellularLocation>
</comment>
<comment type="disruption phenotype">
    <text evidence="2">Causes a vacuolar protein sorting defect.</text>
</comment>
<comment type="miscellaneous">
    <text evidence="3">Partially overlaps SRP54. Disruption phenotypes caused by deletion of this gene may also be a result of a defect in its overlapping gene.</text>
</comment>
<comment type="caution">
    <text evidence="4">Product of a dubious gene prediction unlikely to encode a functional protein. Because of that it is not part of the S.cerevisiae S288c complete/reference proteome set.</text>
</comment>
<accession>O13584</accession>
<dbReference type="EMBL" id="U51033">
    <property type="protein sequence ID" value="AAB68145.1"/>
    <property type="molecule type" value="Genomic_DNA"/>
</dbReference>
<dbReference type="PIR" id="S70045">
    <property type="entry name" value="S70045"/>
</dbReference>
<dbReference type="IntAct" id="O13584">
    <property type="interactions" value="1"/>
</dbReference>
<dbReference type="PaxDb" id="4932-YPR087W"/>
<dbReference type="EnsemblFungi" id="YPR087W_mRNA">
    <property type="protein sequence ID" value="YPR087W"/>
    <property type="gene ID" value="YPR087W"/>
</dbReference>
<dbReference type="AGR" id="SGD:S000006291"/>
<dbReference type="SGD" id="S000006291">
    <property type="gene designation" value="VPS69"/>
</dbReference>
<dbReference type="HOGENOM" id="CLU_2225297_0_0_1"/>
<dbReference type="GO" id="GO:0016020">
    <property type="term" value="C:membrane"/>
    <property type="evidence" value="ECO:0007669"/>
    <property type="project" value="UniProtKB-SubCell"/>
</dbReference>
<dbReference type="GO" id="GO:0006623">
    <property type="term" value="P:protein targeting to vacuole"/>
    <property type="evidence" value="ECO:0007001"/>
    <property type="project" value="SGD"/>
</dbReference>
<keyword id="KW-0472">Membrane</keyword>
<keyword id="KW-0812">Transmembrane</keyword>
<keyword id="KW-1133">Transmembrane helix</keyword>
<feature type="chain" id="PRO_0000299782" description="Putative uncharacterized protein VPS69">
    <location>
        <begin position="1"/>
        <end position="106"/>
    </location>
</feature>
<feature type="transmembrane region" description="Helical" evidence="1">
    <location>
        <begin position="10"/>
        <end position="30"/>
    </location>
</feature>
<feature type="transmembrane region" description="Helical" evidence="1">
    <location>
        <begin position="65"/>
        <end position="85"/>
    </location>
</feature>
<sequence length="106" mass="12069">MHTYIYIYTVYIQMVAFSPYRIVLPFVAFVDLASFSSFRSYQAFLRPFLRPFRHQTCSSYFALDLDFASAFVVPAASFVESLLAYQAYSAYQACLAYPACLACQAS</sequence>
<gene>
    <name type="primary">VPS69</name>
    <name type="ordered locus">YPR087W</name>
</gene>
<proteinExistence type="uncertain"/>
<name>VPS69_YEAST</name>
<evidence type="ECO:0000255" key="1"/>
<evidence type="ECO:0000269" key="2">
    <source>
    </source>
</evidence>
<evidence type="ECO:0000305" key="3"/>
<evidence type="ECO:0000305" key="4">
    <source>
    </source>
</evidence>
<organism>
    <name type="scientific">Saccharomyces cerevisiae (strain ATCC 204508 / S288c)</name>
    <name type="common">Baker's yeast</name>
    <dbReference type="NCBI Taxonomy" id="559292"/>
    <lineage>
        <taxon>Eukaryota</taxon>
        <taxon>Fungi</taxon>
        <taxon>Dikarya</taxon>
        <taxon>Ascomycota</taxon>
        <taxon>Saccharomycotina</taxon>
        <taxon>Saccharomycetes</taxon>
        <taxon>Saccharomycetales</taxon>
        <taxon>Saccharomycetaceae</taxon>
        <taxon>Saccharomyces</taxon>
    </lineage>
</organism>